<sequence>MDVFKQSEVWFVIGSQNLYGPKTLQQVMDNAHQVVNSLNSEAGLPVKLVLKPLVTTPDEITALCREANYDTACIGIMTWLHTFSPAKMWIGGLSILNKPLLQFHTQFNAQIPWETMDMDFMNLNQTAHGGREFGFIGARMRQQHSVITGHWQDKEAHQRIGQWMRVAAAKQESQQLKVARFGDNMREVAVTEGDKVAAQIQFGYSVNAYGIGDLVAVVDAVSKGDIDTLVEEYEATYRFTDAVKLNGDKRENLLDAARIELGMTRFLEQGGFKAFTTNFENLYGLKQLPGLAVQRLMQQGYGFGGEGDWKTAALLRILKVMGTGLKGGTSFMEDYTYNFQPGNDLVVGSHMLEVCPSIAKEEKPLLDVQHLGIGGKADPARLIFSTPAGPALNASLIDMGNRFRLLVNVVDTVEQPHPLPKLPVARAIWQAQPSLATAAEAWIIAGGAHHTVFSQAVGVDELRLYAEMHGIEFLLIDNDTTLPAFKNEIRWNEVYYQLNR</sequence>
<accession>Q66AF8</accession>
<evidence type="ECO:0000255" key="1">
    <source>
        <dbReference type="HAMAP-Rule" id="MF_00519"/>
    </source>
</evidence>
<protein>
    <recommendedName>
        <fullName evidence="1">L-arabinose isomerase</fullName>
        <ecNumber evidence="1">5.3.1.4</ecNumber>
    </recommendedName>
</protein>
<proteinExistence type="inferred from homology"/>
<gene>
    <name evidence="1" type="primary">araA</name>
    <name type="ordered locus">YPTB2172</name>
</gene>
<name>ARAA_YERPS</name>
<organism>
    <name type="scientific">Yersinia pseudotuberculosis serotype I (strain IP32953)</name>
    <dbReference type="NCBI Taxonomy" id="273123"/>
    <lineage>
        <taxon>Bacteria</taxon>
        <taxon>Pseudomonadati</taxon>
        <taxon>Pseudomonadota</taxon>
        <taxon>Gammaproteobacteria</taxon>
        <taxon>Enterobacterales</taxon>
        <taxon>Yersiniaceae</taxon>
        <taxon>Yersinia</taxon>
    </lineage>
</organism>
<feature type="chain" id="PRO_0000198396" description="L-arabinose isomerase">
    <location>
        <begin position="1"/>
        <end position="500"/>
    </location>
</feature>
<feature type="binding site" evidence="1">
    <location>
        <position position="306"/>
    </location>
    <ligand>
        <name>Mn(2+)</name>
        <dbReference type="ChEBI" id="CHEBI:29035"/>
    </ligand>
</feature>
<feature type="binding site" evidence="1">
    <location>
        <position position="333"/>
    </location>
    <ligand>
        <name>Mn(2+)</name>
        <dbReference type="ChEBI" id="CHEBI:29035"/>
    </ligand>
</feature>
<feature type="binding site" evidence="1">
    <location>
        <position position="350"/>
    </location>
    <ligand>
        <name>Mn(2+)</name>
        <dbReference type="ChEBI" id="CHEBI:29035"/>
    </ligand>
</feature>
<feature type="binding site" evidence="1">
    <location>
        <position position="450"/>
    </location>
    <ligand>
        <name>Mn(2+)</name>
        <dbReference type="ChEBI" id="CHEBI:29035"/>
    </ligand>
</feature>
<comment type="function">
    <text evidence="1">Catalyzes the conversion of L-arabinose to L-ribulose.</text>
</comment>
<comment type="catalytic activity">
    <reaction evidence="1">
        <text>beta-L-arabinopyranose = L-ribulose</text>
        <dbReference type="Rhea" id="RHEA:14821"/>
        <dbReference type="ChEBI" id="CHEBI:16880"/>
        <dbReference type="ChEBI" id="CHEBI:40886"/>
        <dbReference type="EC" id="5.3.1.4"/>
    </reaction>
</comment>
<comment type="cofactor">
    <cofactor evidence="1">
        <name>Mn(2+)</name>
        <dbReference type="ChEBI" id="CHEBI:29035"/>
    </cofactor>
    <text evidence="1">Binds 1 Mn(2+) ion per subunit.</text>
</comment>
<comment type="pathway">
    <text evidence="1">Carbohydrate degradation; L-arabinose degradation via L-ribulose; D-xylulose 5-phosphate from L-arabinose (bacterial route): step 1/3.</text>
</comment>
<comment type="subunit">
    <text evidence="1">Homohexamer.</text>
</comment>
<comment type="similarity">
    <text evidence="1">Belongs to the arabinose isomerase family.</text>
</comment>
<keyword id="KW-0054">Arabinose catabolism</keyword>
<keyword id="KW-0119">Carbohydrate metabolism</keyword>
<keyword id="KW-0413">Isomerase</keyword>
<keyword id="KW-0464">Manganese</keyword>
<keyword id="KW-0479">Metal-binding</keyword>
<reference key="1">
    <citation type="journal article" date="2004" name="Proc. Natl. Acad. Sci. U.S.A.">
        <title>Insights into the evolution of Yersinia pestis through whole-genome comparison with Yersinia pseudotuberculosis.</title>
        <authorList>
            <person name="Chain P.S.G."/>
            <person name="Carniel E."/>
            <person name="Larimer F.W."/>
            <person name="Lamerdin J."/>
            <person name="Stoutland P.O."/>
            <person name="Regala W.M."/>
            <person name="Georgescu A.M."/>
            <person name="Vergez L.M."/>
            <person name="Land M.L."/>
            <person name="Motin V.L."/>
            <person name="Brubaker R.R."/>
            <person name="Fowler J."/>
            <person name="Hinnebusch J."/>
            <person name="Marceau M."/>
            <person name="Medigue C."/>
            <person name="Simonet M."/>
            <person name="Chenal-Francisque V."/>
            <person name="Souza B."/>
            <person name="Dacheux D."/>
            <person name="Elliott J.M."/>
            <person name="Derbise A."/>
            <person name="Hauser L.J."/>
            <person name="Garcia E."/>
        </authorList>
    </citation>
    <scope>NUCLEOTIDE SEQUENCE [LARGE SCALE GENOMIC DNA]</scope>
    <source>
        <strain>IP32953</strain>
    </source>
</reference>
<dbReference type="EC" id="5.3.1.4" evidence="1"/>
<dbReference type="EMBL" id="BX936398">
    <property type="protein sequence ID" value="CAH21410.1"/>
    <property type="molecule type" value="Genomic_DNA"/>
</dbReference>
<dbReference type="RefSeq" id="WP_011192463.1">
    <property type="nucleotide sequence ID" value="NC_006155.1"/>
</dbReference>
<dbReference type="SMR" id="Q66AF8"/>
<dbReference type="GeneID" id="49785832"/>
<dbReference type="KEGG" id="ypo:BZ17_290"/>
<dbReference type="KEGG" id="yps:YPTB2172"/>
<dbReference type="PATRIC" id="fig|273123.14.peg.307"/>
<dbReference type="UniPathway" id="UPA00145">
    <property type="reaction ID" value="UER00565"/>
</dbReference>
<dbReference type="Proteomes" id="UP000001011">
    <property type="component" value="Chromosome"/>
</dbReference>
<dbReference type="GO" id="GO:0005829">
    <property type="term" value="C:cytosol"/>
    <property type="evidence" value="ECO:0007669"/>
    <property type="project" value="TreeGrafter"/>
</dbReference>
<dbReference type="GO" id="GO:0008733">
    <property type="term" value="F:L-arabinose isomerase activity"/>
    <property type="evidence" value="ECO:0007669"/>
    <property type="project" value="UniProtKB-UniRule"/>
</dbReference>
<dbReference type="GO" id="GO:0030145">
    <property type="term" value="F:manganese ion binding"/>
    <property type="evidence" value="ECO:0007669"/>
    <property type="project" value="UniProtKB-UniRule"/>
</dbReference>
<dbReference type="GO" id="GO:0019569">
    <property type="term" value="P:L-arabinose catabolic process to xylulose 5-phosphate"/>
    <property type="evidence" value="ECO:0007669"/>
    <property type="project" value="UniProtKB-UniRule"/>
</dbReference>
<dbReference type="CDD" id="cd03557">
    <property type="entry name" value="L-arabinose_isomerase"/>
    <property type="match status" value="1"/>
</dbReference>
<dbReference type="FunFam" id="3.40.50.10940:FF:000001">
    <property type="entry name" value="L-arabinose isomerase"/>
    <property type="match status" value="1"/>
</dbReference>
<dbReference type="Gene3D" id="3.40.50.10940">
    <property type="match status" value="1"/>
</dbReference>
<dbReference type="HAMAP" id="MF_00519">
    <property type="entry name" value="Arabinose_Isome"/>
    <property type="match status" value="1"/>
</dbReference>
<dbReference type="InterPro" id="IPR024664">
    <property type="entry name" value="Ara_Isoase_C"/>
</dbReference>
<dbReference type="InterPro" id="IPR055390">
    <property type="entry name" value="AraA_central"/>
</dbReference>
<dbReference type="InterPro" id="IPR055389">
    <property type="entry name" value="AraA_N"/>
</dbReference>
<dbReference type="InterPro" id="IPR038583">
    <property type="entry name" value="AraA_N_sf"/>
</dbReference>
<dbReference type="InterPro" id="IPR004216">
    <property type="entry name" value="Fuc/Ara_isomerase_C"/>
</dbReference>
<dbReference type="InterPro" id="IPR009015">
    <property type="entry name" value="Fucose_isomerase_N/cen_sf"/>
</dbReference>
<dbReference type="InterPro" id="IPR003762">
    <property type="entry name" value="Lara_isomerase"/>
</dbReference>
<dbReference type="NCBIfam" id="NF002795">
    <property type="entry name" value="PRK02929.1"/>
    <property type="match status" value="1"/>
</dbReference>
<dbReference type="PANTHER" id="PTHR38464">
    <property type="entry name" value="L-ARABINOSE ISOMERASE"/>
    <property type="match status" value="1"/>
</dbReference>
<dbReference type="PANTHER" id="PTHR38464:SF1">
    <property type="entry name" value="L-ARABINOSE ISOMERASE"/>
    <property type="match status" value="1"/>
</dbReference>
<dbReference type="Pfam" id="PF24856">
    <property type="entry name" value="AraA_central"/>
    <property type="match status" value="1"/>
</dbReference>
<dbReference type="Pfam" id="PF02610">
    <property type="entry name" value="AraA_N"/>
    <property type="match status" value="1"/>
</dbReference>
<dbReference type="Pfam" id="PF11762">
    <property type="entry name" value="Arabinose_Iso_C"/>
    <property type="match status" value="1"/>
</dbReference>
<dbReference type="PIRSF" id="PIRSF001478">
    <property type="entry name" value="L-ara_isomerase"/>
    <property type="match status" value="1"/>
</dbReference>
<dbReference type="SUPFAM" id="SSF50443">
    <property type="entry name" value="FucI/AraA C-terminal domain-like"/>
    <property type="match status" value="1"/>
</dbReference>
<dbReference type="SUPFAM" id="SSF53743">
    <property type="entry name" value="FucI/AraA N-terminal and middle domains"/>
    <property type="match status" value="1"/>
</dbReference>